<sequence length="302" mass="33958">MKKNRLNLNGVVVINKVKDISSNKVLQQLKYLFNAQKAGHTGTLDPMATGVLPICFGRATKIAQYLLDADKEYIATIRLGIETDSGDAEGEIIAKSINIPELSAEYLETVLAKFRGDVVQIPPMYSALKYNGQPLYKLAREGKTVEVKSRNIKIYELELLEFNIDSLKIRVKCSKGTYIRSLAIDIGKTLGCGGHLIALQRTQSGPFKLSEAFRLEQLKDLSFEQKIASITNIESVFIDKPIYSLLEEEKDDLYKRGLFADKPHLDGTVRIYDVEKFVAIAEFDKGKLINKKFFDQDILISE</sequence>
<keyword id="KW-0413">Isomerase</keyword>
<keyword id="KW-1185">Reference proteome</keyword>
<keyword id="KW-0819">tRNA processing</keyword>
<proteinExistence type="inferred from homology"/>
<organism>
    <name type="scientific">Francisella tularensis subsp. tularensis (strain SCHU S4 / Schu 4)</name>
    <dbReference type="NCBI Taxonomy" id="177416"/>
    <lineage>
        <taxon>Bacteria</taxon>
        <taxon>Pseudomonadati</taxon>
        <taxon>Pseudomonadota</taxon>
        <taxon>Gammaproteobacteria</taxon>
        <taxon>Thiotrichales</taxon>
        <taxon>Francisellaceae</taxon>
        <taxon>Francisella</taxon>
    </lineage>
</organism>
<reference key="1">
    <citation type="journal article" date="2005" name="Nat. Genet.">
        <title>The complete genome sequence of Francisella tularensis, the causative agent of tularemia.</title>
        <authorList>
            <person name="Larsson P."/>
            <person name="Oyston P.C.F."/>
            <person name="Chain P."/>
            <person name="Chu M.C."/>
            <person name="Duffield M."/>
            <person name="Fuxelius H.-H."/>
            <person name="Garcia E."/>
            <person name="Haelltorp G."/>
            <person name="Johansson D."/>
            <person name="Isherwood K.E."/>
            <person name="Karp P.D."/>
            <person name="Larsson E."/>
            <person name="Liu Y."/>
            <person name="Michell S."/>
            <person name="Prior J."/>
            <person name="Prior R."/>
            <person name="Malfatti S."/>
            <person name="Sjoestedt A."/>
            <person name="Svensson K."/>
            <person name="Thompson N."/>
            <person name="Vergez L."/>
            <person name="Wagg J.K."/>
            <person name="Wren B.W."/>
            <person name="Lindler L.E."/>
            <person name="Andersson S.G.E."/>
            <person name="Forsman M."/>
            <person name="Titball R.W."/>
        </authorList>
    </citation>
    <scope>NUCLEOTIDE SEQUENCE [LARGE SCALE GENOMIC DNA]</scope>
    <source>
        <strain>SCHU S4 / Schu 4</strain>
    </source>
</reference>
<gene>
    <name evidence="1" type="primary">truB</name>
    <name type="ordered locus">FTT_1554c</name>
</gene>
<comment type="function">
    <text evidence="1">Responsible for synthesis of pseudouridine from uracil-55 in the psi GC loop of transfer RNAs.</text>
</comment>
<comment type="catalytic activity">
    <reaction evidence="1">
        <text>uridine(55) in tRNA = pseudouridine(55) in tRNA</text>
        <dbReference type="Rhea" id="RHEA:42532"/>
        <dbReference type="Rhea" id="RHEA-COMP:10101"/>
        <dbReference type="Rhea" id="RHEA-COMP:10102"/>
        <dbReference type="ChEBI" id="CHEBI:65314"/>
        <dbReference type="ChEBI" id="CHEBI:65315"/>
        <dbReference type="EC" id="5.4.99.25"/>
    </reaction>
</comment>
<comment type="similarity">
    <text evidence="1">Belongs to the pseudouridine synthase TruB family. Type 1 subfamily.</text>
</comment>
<dbReference type="EC" id="5.4.99.25" evidence="1"/>
<dbReference type="EMBL" id="AJ749949">
    <property type="protein sequence ID" value="CAG46187.1"/>
    <property type="molecule type" value="Genomic_DNA"/>
</dbReference>
<dbReference type="RefSeq" id="WP_003022450.1">
    <property type="nucleotide sequence ID" value="NC_006570.2"/>
</dbReference>
<dbReference type="RefSeq" id="YP_170478.1">
    <property type="nucleotide sequence ID" value="NC_006570.2"/>
</dbReference>
<dbReference type="SMR" id="Q5NER4"/>
<dbReference type="IntAct" id="Q5NER4">
    <property type="interactions" value="1"/>
</dbReference>
<dbReference type="STRING" id="177416.FTT_1554c"/>
<dbReference type="DNASU" id="3190994"/>
<dbReference type="EnsemblBacteria" id="CAG46187">
    <property type="protein sequence ID" value="CAG46187"/>
    <property type="gene ID" value="FTT_1554c"/>
</dbReference>
<dbReference type="KEGG" id="ftu:FTT_1554c"/>
<dbReference type="eggNOG" id="COG0130">
    <property type="taxonomic scope" value="Bacteria"/>
</dbReference>
<dbReference type="OrthoDB" id="9802309at2"/>
<dbReference type="Proteomes" id="UP000001174">
    <property type="component" value="Chromosome"/>
</dbReference>
<dbReference type="GO" id="GO:0003723">
    <property type="term" value="F:RNA binding"/>
    <property type="evidence" value="ECO:0007669"/>
    <property type="project" value="InterPro"/>
</dbReference>
<dbReference type="GO" id="GO:0160148">
    <property type="term" value="F:tRNA pseudouridine(55) synthase activity"/>
    <property type="evidence" value="ECO:0007669"/>
    <property type="project" value="UniProtKB-EC"/>
</dbReference>
<dbReference type="GO" id="GO:1990481">
    <property type="term" value="P:mRNA pseudouridine synthesis"/>
    <property type="evidence" value="ECO:0007669"/>
    <property type="project" value="TreeGrafter"/>
</dbReference>
<dbReference type="GO" id="GO:0031119">
    <property type="term" value="P:tRNA pseudouridine synthesis"/>
    <property type="evidence" value="ECO:0007669"/>
    <property type="project" value="UniProtKB-UniRule"/>
</dbReference>
<dbReference type="CDD" id="cd02573">
    <property type="entry name" value="PseudoU_synth_EcTruB"/>
    <property type="match status" value="1"/>
</dbReference>
<dbReference type="FunFam" id="3.30.2350.10:FF:000011">
    <property type="entry name" value="tRNA pseudouridine synthase B"/>
    <property type="match status" value="1"/>
</dbReference>
<dbReference type="Gene3D" id="3.30.2350.10">
    <property type="entry name" value="Pseudouridine synthase"/>
    <property type="match status" value="1"/>
</dbReference>
<dbReference type="HAMAP" id="MF_01080">
    <property type="entry name" value="TruB_bact"/>
    <property type="match status" value="1"/>
</dbReference>
<dbReference type="InterPro" id="IPR020103">
    <property type="entry name" value="PsdUridine_synth_cat_dom_sf"/>
</dbReference>
<dbReference type="InterPro" id="IPR002501">
    <property type="entry name" value="PsdUridine_synth_N"/>
</dbReference>
<dbReference type="InterPro" id="IPR014780">
    <property type="entry name" value="tRNA_psdUridine_synth_TruB"/>
</dbReference>
<dbReference type="InterPro" id="IPR032819">
    <property type="entry name" value="TruB_C"/>
</dbReference>
<dbReference type="NCBIfam" id="TIGR00431">
    <property type="entry name" value="TruB"/>
    <property type="match status" value="1"/>
</dbReference>
<dbReference type="PANTHER" id="PTHR13767:SF2">
    <property type="entry name" value="PSEUDOURIDYLATE SYNTHASE TRUB1"/>
    <property type="match status" value="1"/>
</dbReference>
<dbReference type="PANTHER" id="PTHR13767">
    <property type="entry name" value="TRNA-PSEUDOURIDINE SYNTHASE"/>
    <property type="match status" value="1"/>
</dbReference>
<dbReference type="Pfam" id="PF16198">
    <property type="entry name" value="TruB_C_2"/>
    <property type="match status" value="1"/>
</dbReference>
<dbReference type="Pfam" id="PF01509">
    <property type="entry name" value="TruB_N"/>
    <property type="match status" value="1"/>
</dbReference>
<dbReference type="SUPFAM" id="SSF55120">
    <property type="entry name" value="Pseudouridine synthase"/>
    <property type="match status" value="1"/>
</dbReference>
<feature type="chain" id="PRO_0000121836" description="tRNA pseudouridine synthase B">
    <location>
        <begin position="1"/>
        <end position="302"/>
    </location>
</feature>
<feature type="active site" description="Nucleophile" evidence="1">
    <location>
        <position position="45"/>
    </location>
</feature>
<accession>Q5NER4</accession>
<evidence type="ECO:0000255" key="1">
    <source>
        <dbReference type="HAMAP-Rule" id="MF_01080"/>
    </source>
</evidence>
<name>TRUB_FRATT</name>
<protein>
    <recommendedName>
        <fullName evidence="1">tRNA pseudouridine synthase B</fullName>
        <ecNumber evidence="1">5.4.99.25</ecNumber>
    </recommendedName>
    <alternativeName>
        <fullName evidence="1">tRNA pseudouridine(55) synthase</fullName>
        <shortName evidence="1">Psi55 synthase</shortName>
    </alternativeName>
    <alternativeName>
        <fullName evidence="1">tRNA pseudouridylate synthase</fullName>
    </alternativeName>
    <alternativeName>
        <fullName evidence="1">tRNA-uridine isomerase</fullName>
    </alternativeName>
</protein>